<reference key="1">
    <citation type="journal article" date="2011" name="MBio">
        <title>Novel metabolic attributes of the genus Cyanothece, comprising a group of unicellular nitrogen-fixing Cyanobacteria.</title>
        <authorList>
            <person name="Bandyopadhyay A."/>
            <person name="Elvitigala T."/>
            <person name="Welsh E."/>
            <person name="Stockel J."/>
            <person name="Liberton M."/>
            <person name="Min H."/>
            <person name="Sherman L.A."/>
            <person name="Pakrasi H.B."/>
        </authorList>
    </citation>
    <scope>NUCLEOTIDE SEQUENCE [LARGE SCALE GENOMIC DNA]</scope>
    <source>
        <strain>PCC 7424</strain>
    </source>
</reference>
<evidence type="ECO:0000255" key="1">
    <source>
        <dbReference type="HAMAP-Rule" id="MF_00201"/>
    </source>
</evidence>
<dbReference type="EMBL" id="CP001291">
    <property type="protein sequence ID" value="ACK71239.1"/>
    <property type="molecule type" value="Genomic_DNA"/>
</dbReference>
<dbReference type="RefSeq" id="WP_015954839.1">
    <property type="nucleotide sequence ID" value="NC_011729.1"/>
</dbReference>
<dbReference type="SMR" id="B7K8P1"/>
<dbReference type="STRING" id="65393.PCC7424_2832"/>
<dbReference type="KEGG" id="cyc:PCC7424_2832"/>
<dbReference type="eggNOG" id="COG1381">
    <property type="taxonomic scope" value="Bacteria"/>
</dbReference>
<dbReference type="HOGENOM" id="CLU_066632_0_0_3"/>
<dbReference type="OrthoDB" id="9797083at2"/>
<dbReference type="Proteomes" id="UP000002384">
    <property type="component" value="Chromosome"/>
</dbReference>
<dbReference type="GO" id="GO:0043590">
    <property type="term" value="C:bacterial nucleoid"/>
    <property type="evidence" value="ECO:0007669"/>
    <property type="project" value="TreeGrafter"/>
</dbReference>
<dbReference type="GO" id="GO:0006310">
    <property type="term" value="P:DNA recombination"/>
    <property type="evidence" value="ECO:0007669"/>
    <property type="project" value="UniProtKB-UniRule"/>
</dbReference>
<dbReference type="GO" id="GO:0006302">
    <property type="term" value="P:double-strand break repair"/>
    <property type="evidence" value="ECO:0007669"/>
    <property type="project" value="TreeGrafter"/>
</dbReference>
<dbReference type="Gene3D" id="2.40.50.140">
    <property type="entry name" value="Nucleic acid-binding proteins"/>
    <property type="match status" value="1"/>
</dbReference>
<dbReference type="Gene3D" id="1.20.1440.120">
    <property type="entry name" value="Recombination protein O, C-terminal domain"/>
    <property type="match status" value="1"/>
</dbReference>
<dbReference type="HAMAP" id="MF_00201">
    <property type="entry name" value="RecO"/>
    <property type="match status" value="1"/>
</dbReference>
<dbReference type="InterPro" id="IPR037278">
    <property type="entry name" value="ARFGAP/RecO"/>
</dbReference>
<dbReference type="InterPro" id="IPR022572">
    <property type="entry name" value="DNA_rep/recomb_RecO_N"/>
</dbReference>
<dbReference type="InterPro" id="IPR012340">
    <property type="entry name" value="NA-bd_OB-fold"/>
</dbReference>
<dbReference type="InterPro" id="IPR003717">
    <property type="entry name" value="RecO"/>
</dbReference>
<dbReference type="InterPro" id="IPR042242">
    <property type="entry name" value="RecO_C"/>
</dbReference>
<dbReference type="NCBIfam" id="TIGR00613">
    <property type="entry name" value="reco"/>
    <property type="match status" value="1"/>
</dbReference>
<dbReference type="PANTHER" id="PTHR33991">
    <property type="entry name" value="DNA REPAIR PROTEIN RECO"/>
    <property type="match status" value="1"/>
</dbReference>
<dbReference type="PANTHER" id="PTHR33991:SF1">
    <property type="entry name" value="DNA REPAIR PROTEIN RECO"/>
    <property type="match status" value="1"/>
</dbReference>
<dbReference type="Pfam" id="PF02565">
    <property type="entry name" value="RecO_C"/>
    <property type="match status" value="1"/>
</dbReference>
<dbReference type="Pfam" id="PF11967">
    <property type="entry name" value="RecO_N"/>
    <property type="match status" value="1"/>
</dbReference>
<dbReference type="SUPFAM" id="SSF57863">
    <property type="entry name" value="ArfGap/RecO-like zinc finger"/>
    <property type="match status" value="1"/>
</dbReference>
<dbReference type="SUPFAM" id="SSF50249">
    <property type="entry name" value="Nucleic acid-binding proteins"/>
    <property type="match status" value="1"/>
</dbReference>
<name>RECO_GLOC7</name>
<sequence>MSKTYQATGIILKGMPLGEADRLVTILTSEYGLIQAVVPGARKHKSRLRGRSELFVVNQLLIVKGRSLDKLIQAETLESYPGLSRDLGKLTASQYLAELVLSLALCEQPQIELYELLNEHLRRIEQKATPQTLYPHLAQAVFHLLAIAGVAPQVYQCCLSREPIETNFIDSLWRVGFSFESGGAINLSSDRRQPFQPSDDLKKEIFLNKLNWKLTAVELTLLQQLGQKFLPQAYDIFPMDVAISSIDVAWIKIERILREYAQYHFGRSFRSATLVDTLAPVDF</sequence>
<keyword id="KW-0227">DNA damage</keyword>
<keyword id="KW-0233">DNA recombination</keyword>
<keyword id="KW-0234">DNA repair</keyword>
<keyword id="KW-1185">Reference proteome</keyword>
<accession>B7K8P1</accession>
<protein>
    <recommendedName>
        <fullName evidence="1">DNA repair protein RecO</fullName>
    </recommendedName>
    <alternativeName>
        <fullName evidence="1">Recombination protein O</fullName>
    </alternativeName>
</protein>
<organism>
    <name type="scientific">Gloeothece citriformis (strain PCC 7424)</name>
    <name type="common">Cyanothece sp. (strain PCC 7424)</name>
    <dbReference type="NCBI Taxonomy" id="65393"/>
    <lineage>
        <taxon>Bacteria</taxon>
        <taxon>Bacillati</taxon>
        <taxon>Cyanobacteriota</taxon>
        <taxon>Cyanophyceae</taxon>
        <taxon>Oscillatoriophycideae</taxon>
        <taxon>Chroococcales</taxon>
        <taxon>Aphanothecaceae</taxon>
        <taxon>Gloeothece</taxon>
        <taxon>Gloeothece citriformis</taxon>
    </lineage>
</organism>
<gene>
    <name evidence="1" type="primary">recO</name>
    <name type="ordered locus">PCC7424_2832</name>
</gene>
<comment type="function">
    <text evidence="1">Involved in DNA repair and RecF pathway recombination.</text>
</comment>
<comment type="similarity">
    <text evidence="1">Belongs to the RecO family.</text>
</comment>
<proteinExistence type="inferred from homology"/>
<feature type="chain" id="PRO_1000118712" description="DNA repair protein RecO">
    <location>
        <begin position="1"/>
        <end position="283"/>
    </location>
</feature>